<evidence type="ECO:0000255" key="1">
    <source>
        <dbReference type="HAMAP-Rule" id="MF_00408"/>
    </source>
</evidence>
<sequence>MEPEIKVVNVVVSTQIGTDIDLEYAADILDNAEYEPEQFPGLVCRLSEPKVALLIFRSGKLNCTGARCKEDAVIAINKIVKELKEAGMDLIDNPEVKVQNMVATTELGMEPNLDDISTLECTEYEPEQFPGLVYRLSEPKVVVLIFGSGKVVITGLKVIEDAYIAFDKISKTLKELEEELY</sequence>
<reference key="1">
    <citation type="journal article" date="2004" name="J. Bacteriol.">
        <title>Complete genome sequence of the genetically tractable hydrogenotrophic methanogen Methanococcus maripaludis.</title>
        <authorList>
            <person name="Hendrickson E.L."/>
            <person name="Kaul R."/>
            <person name="Zhou Y."/>
            <person name="Bovee D."/>
            <person name="Chapman P."/>
            <person name="Chung J."/>
            <person name="Conway de Macario E."/>
            <person name="Dodsworth J.A."/>
            <person name="Gillett W."/>
            <person name="Graham D.E."/>
            <person name="Hackett M."/>
            <person name="Haydock A.K."/>
            <person name="Kang A."/>
            <person name="Land M.L."/>
            <person name="Levy R."/>
            <person name="Lie T.J."/>
            <person name="Major T.A."/>
            <person name="Moore B.C."/>
            <person name="Porat I."/>
            <person name="Palmeiri A."/>
            <person name="Rouse G."/>
            <person name="Saenphimmachak C."/>
            <person name="Soell D."/>
            <person name="Van Dien S."/>
            <person name="Wang T."/>
            <person name="Whitman W.B."/>
            <person name="Xia Q."/>
            <person name="Zhang Y."/>
            <person name="Larimer F.W."/>
            <person name="Olson M.V."/>
            <person name="Leigh J.A."/>
        </authorList>
    </citation>
    <scope>NUCLEOTIDE SEQUENCE [LARGE SCALE GENOMIC DNA]</scope>
    <source>
        <strain>DSM 14266 / JCM 13030 / NBRC 101832 / S2 / LL</strain>
    </source>
</reference>
<dbReference type="EMBL" id="BX950229">
    <property type="protein sequence ID" value="CAF29813.1"/>
    <property type="molecule type" value="Genomic_DNA"/>
</dbReference>
<dbReference type="RefSeq" id="WP_011170201.1">
    <property type="nucleotide sequence ID" value="NC_005791.1"/>
</dbReference>
<dbReference type="SMR" id="Q6M0L3"/>
<dbReference type="STRING" id="267377.MMP0257"/>
<dbReference type="EnsemblBacteria" id="CAF29813">
    <property type="protein sequence ID" value="CAF29813"/>
    <property type="gene ID" value="MMP0257"/>
</dbReference>
<dbReference type="KEGG" id="mmp:MMP0257"/>
<dbReference type="PATRIC" id="fig|267377.15.peg.259"/>
<dbReference type="eggNOG" id="arCOG01764">
    <property type="taxonomic scope" value="Archaea"/>
</dbReference>
<dbReference type="HOGENOM" id="CLU_060161_4_3_2"/>
<dbReference type="OrthoDB" id="350539at2157"/>
<dbReference type="Proteomes" id="UP000000590">
    <property type="component" value="Chromosome"/>
</dbReference>
<dbReference type="GO" id="GO:0003677">
    <property type="term" value="F:DNA binding"/>
    <property type="evidence" value="ECO:0007669"/>
    <property type="project" value="UniProtKB-KW"/>
</dbReference>
<dbReference type="GO" id="GO:0003700">
    <property type="term" value="F:DNA-binding transcription factor activity"/>
    <property type="evidence" value="ECO:0007669"/>
    <property type="project" value="UniProtKB-UniRule"/>
</dbReference>
<dbReference type="GO" id="GO:0006352">
    <property type="term" value="P:DNA-templated transcription initiation"/>
    <property type="evidence" value="ECO:0007669"/>
    <property type="project" value="InterPro"/>
</dbReference>
<dbReference type="CDD" id="cd04518">
    <property type="entry name" value="TBP_archaea"/>
    <property type="match status" value="1"/>
</dbReference>
<dbReference type="FunFam" id="3.30.310.10:FF:000007">
    <property type="entry name" value="TATA-box-binding protein"/>
    <property type="match status" value="1"/>
</dbReference>
<dbReference type="FunFam" id="3.30.310.10:FF:000010">
    <property type="entry name" value="TATA-box-binding protein"/>
    <property type="match status" value="1"/>
</dbReference>
<dbReference type="Gene3D" id="3.30.310.10">
    <property type="entry name" value="TATA-Binding Protein"/>
    <property type="match status" value="2"/>
</dbReference>
<dbReference type="HAMAP" id="MF_00408">
    <property type="entry name" value="TATA_bind_prot_arch"/>
    <property type="match status" value="1"/>
</dbReference>
<dbReference type="InterPro" id="IPR000814">
    <property type="entry name" value="TBP"/>
</dbReference>
<dbReference type="InterPro" id="IPR033711">
    <property type="entry name" value="TBP_archaea"/>
</dbReference>
<dbReference type="InterPro" id="IPR030491">
    <property type="entry name" value="TBP_CS"/>
</dbReference>
<dbReference type="InterPro" id="IPR012295">
    <property type="entry name" value="TBP_dom_sf"/>
</dbReference>
<dbReference type="NCBIfam" id="NF001593">
    <property type="entry name" value="PRK00394.1-2"/>
    <property type="match status" value="1"/>
</dbReference>
<dbReference type="NCBIfam" id="NF001594">
    <property type="entry name" value="PRK00394.1-3"/>
    <property type="match status" value="1"/>
</dbReference>
<dbReference type="PANTHER" id="PTHR10126">
    <property type="entry name" value="TATA-BOX BINDING PROTEIN"/>
    <property type="match status" value="1"/>
</dbReference>
<dbReference type="Pfam" id="PF00352">
    <property type="entry name" value="TBP"/>
    <property type="match status" value="2"/>
</dbReference>
<dbReference type="PRINTS" id="PR00686">
    <property type="entry name" value="TIFACTORIID"/>
</dbReference>
<dbReference type="SUPFAM" id="SSF55945">
    <property type="entry name" value="TATA-box binding protein-like"/>
    <property type="match status" value="2"/>
</dbReference>
<dbReference type="PROSITE" id="PS00351">
    <property type="entry name" value="TFIID"/>
    <property type="match status" value="2"/>
</dbReference>
<name>TBP_METMP</name>
<protein>
    <recommendedName>
        <fullName evidence="1">TATA-box-binding protein</fullName>
    </recommendedName>
    <alternativeName>
        <fullName evidence="1">Box A-binding protein</fullName>
        <shortName evidence="1">BAP</shortName>
    </alternativeName>
    <alternativeName>
        <fullName evidence="1">TATA sequence-binding protein</fullName>
        <shortName evidence="1">TBP</shortName>
    </alternativeName>
    <alternativeName>
        <fullName evidence="1">TATA-box factor</fullName>
    </alternativeName>
</protein>
<comment type="function">
    <text evidence="1">General factor that plays a role in the activation of archaeal genes transcribed by RNA polymerase. Binds specifically to the TATA box promoter element which lies close to the position of transcription initiation.</text>
</comment>
<comment type="similarity">
    <text evidence="1">Belongs to the TBP family.</text>
</comment>
<accession>Q6M0L3</accession>
<gene>
    <name evidence="1" type="primary">tbp</name>
    <name type="ordered locus">MMP0257</name>
</gene>
<proteinExistence type="inferred from homology"/>
<feature type="chain" id="PRO_0000154013" description="TATA-box-binding protein">
    <location>
        <begin position="1"/>
        <end position="181"/>
    </location>
</feature>
<feature type="repeat" description="1">
    <location>
        <begin position="7"/>
        <end position="83"/>
    </location>
</feature>
<feature type="repeat" description="2">
    <location>
        <begin position="98"/>
        <end position="173"/>
    </location>
</feature>
<organism>
    <name type="scientific">Methanococcus maripaludis (strain DSM 14266 / JCM 13030 / NBRC 101832 / S2 / LL)</name>
    <dbReference type="NCBI Taxonomy" id="267377"/>
    <lineage>
        <taxon>Archaea</taxon>
        <taxon>Methanobacteriati</taxon>
        <taxon>Methanobacteriota</taxon>
        <taxon>Methanomada group</taxon>
        <taxon>Methanococci</taxon>
        <taxon>Methanococcales</taxon>
        <taxon>Methanococcaceae</taxon>
        <taxon>Methanococcus</taxon>
    </lineage>
</organism>
<keyword id="KW-0238">DNA-binding</keyword>
<keyword id="KW-1185">Reference proteome</keyword>
<keyword id="KW-0677">Repeat</keyword>
<keyword id="KW-0804">Transcription</keyword>
<keyword id="KW-0805">Transcription regulation</keyword>